<evidence type="ECO:0000250" key="1"/>
<evidence type="ECO:0000269" key="2">
    <source>
    </source>
</evidence>
<evidence type="ECO:0000305" key="3"/>
<accession>P65278</accession>
<accession>A0A1R3Y4Q4</accession>
<accession>O53236</accession>
<accession>X2BM97</accession>
<feature type="chain" id="PRO_0000141837" description="3-isopropylmalate dehydratase small subunit">
    <location>
        <begin position="1"/>
        <end position="198"/>
    </location>
</feature>
<reference key="1">
    <citation type="journal article" date="2003" name="Proc. Natl. Acad. Sci. U.S.A.">
        <title>The complete genome sequence of Mycobacterium bovis.</title>
        <authorList>
            <person name="Garnier T."/>
            <person name="Eiglmeier K."/>
            <person name="Camus J.-C."/>
            <person name="Medina N."/>
            <person name="Mansoor H."/>
            <person name="Pryor M."/>
            <person name="Duthoy S."/>
            <person name="Grondin S."/>
            <person name="Lacroix C."/>
            <person name="Monsempe C."/>
            <person name="Simon S."/>
            <person name="Harris B."/>
            <person name="Atkin R."/>
            <person name="Doggett J."/>
            <person name="Mayes R."/>
            <person name="Keating L."/>
            <person name="Wheeler P.R."/>
            <person name="Parkhill J."/>
            <person name="Barrell B.G."/>
            <person name="Cole S.T."/>
            <person name="Gordon S.V."/>
            <person name="Hewinson R.G."/>
        </authorList>
    </citation>
    <scope>NUCLEOTIDE SEQUENCE [LARGE SCALE GENOMIC DNA]</scope>
    <source>
        <strain>ATCC BAA-935 / AF2122/97</strain>
    </source>
</reference>
<reference key="2">
    <citation type="journal article" date="2017" name="Genome Announc.">
        <title>Updated reference genome sequence and annotation of Mycobacterium bovis AF2122/97.</title>
        <authorList>
            <person name="Malone K.M."/>
            <person name="Farrell D."/>
            <person name="Stuber T.P."/>
            <person name="Schubert O.T."/>
            <person name="Aebersold R."/>
            <person name="Robbe-Austerman S."/>
            <person name="Gordon S.V."/>
        </authorList>
    </citation>
    <scope>NUCLEOTIDE SEQUENCE [LARGE SCALE GENOMIC DNA]</scope>
    <scope>GENOME REANNOTATION</scope>
    <source>
        <strain>ATCC BAA-935 / AF2122/97</strain>
    </source>
</reference>
<reference key="3">
    <citation type="journal article" date="2005" name="FEMS Microbiol. Lett.">
        <title>Thiol specific oxidative stress response in Mycobacteria.</title>
        <authorList>
            <person name="Dosanjh N.S."/>
            <person name="Rawat M."/>
            <person name="Chung J.-H."/>
            <person name="Av-Gay Y."/>
        </authorList>
    </citation>
    <scope>IDENTIFICATION BY MASS SPECTROMETRY</scope>
    <scope>INDUCTION</scope>
    <source>
        <strain>BCG / Pasteur</strain>
    </source>
</reference>
<organism>
    <name type="scientific">Mycobacterium bovis (strain ATCC BAA-935 / AF2122/97)</name>
    <dbReference type="NCBI Taxonomy" id="233413"/>
    <lineage>
        <taxon>Bacteria</taxon>
        <taxon>Bacillati</taxon>
        <taxon>Actinomycetota</taxon>
        <taxon>Actinomycetes</taxon>
        <taxon>Mycobacteriales</taxon>
        <taxon>Mycobacteriaceae</taxon>
        <taxon>Mycobacterium</taxon>
        <taxon>Mycobacterium tuberculosis complex</taxon>
    </lineage>
</organism>
<gene>
    <name type="primary">leuD</name>
    <name type="ordered locus">BQ2027_MB3011C</name>
</gene>
<dbReference type="EC" id="4.2.1.33"/>
<dbReference type="EMBL" id="LT708304">
    <property type="protein sequence ID" value="SIU01635.1"/>
    <property type="molecule type" value="Genomic_DNA"/>
</dbReference>
<dbReference type="RefSeq" id="NP_856656.1">
    <property type="nucleotide sequence ID" value="NC_002945.3"/>
</dbReference>
<dbReference type="RefSeq" id="WP_003415110.1">
    <property type="nucleotide sequence ID" value="NC_002945.4"/>
</dbReference>
<dbReference type="SMR" id="P65278"/>
<dbReference type="GeneID" id="45426976"/>
<dbReference type="KEGG" id="mbo:BQ2027_MB3011C"/>
<dbReference type="PATRIC" id="fig|233413.5.peg.3310"/>
<dbReference type="UniPathway" id="UPA00048">
    <property type="reaction ID" value="UER00071"/>
</dbReference>
<dbReference type="Proteomes" id="UP000001419">
    <property type="component" value="Chromosome"/>
</dbReference>
<dbReference type="GO" id="GO:0009316">
    <property type="term" value="C:3-isopropylmalate dehydratase complex"/>
    <property type="evidence" value="ECO:0007669"/>
    <property type="project" value="InterPro"/>
</dbReference>
<dbReference type="GO" id="GO:0003861">
    <property type="term" value="F:3-isopropylmalate dehydratase activity"/>
    <property type="evidence" value="ECO:0007669"/>
    <property type="project" value="UniProtKB-UniRule"/>
</dbReference>
<dbReference type="GO" id="GO:0009098">
    <property type="term" value="P:L-leucine biosynthetic process"/>
    <property type="evidence" value="ECO:0007669"/>
    <property type="project" value="UniProtKB-UniRule"/>
</dbReference>
<dbReference type="CDD" id="cd01577">
    <property type="entry name" value="IPMI_Swivel"/>
    <property type="match status" value="1"/>
</dbReference>
<dbReference type="FunFam" id="3.20.19.10:FF:000003">
    <property type="entry name" value="3-isopropylmalate dehydratase small subunit"/>
    <property type="match status" value="1"/>
</dbReference>
<dbReference type="Gene3D" id="3.20.19.10">
    <property type="entry name" value="Aconitase, domain 4"/>
    <property type="match status" value="1"/>
</dbReference>
<dbReference type="HAMAP" id="MF_01031">
    <property type="entry name" value="LeuD_type1"/>
    <property type="match status" value="1"/>
</dbReference>
<dbReference type="InterPro" id="IPR004431">
    <property type="entry name" value="3-IsopropMal_deHydase_ssu"/>
</dbReference>
<dbReference type="InterPro" id="IPR015928">
    <property type="entry name" value="Aconitase/3IPM_dehydase_swvl"/>
</dbReference>
<dbReference type="InterPro" id="IPR000573">
    <property type="entry name" value="AconitaseA/IPMdHydase_ssu_swvl"/>
</dbReference>
<dbReference type="InterPro" id="IPR033940">
    <property type="entry name" value="IPMI_Swivel"/>
</dbReference>
<dbReference type="InterPro" id="IPR050075">
    <property type="entry name" value="LeuD"/>
</dbReference>
<dbReference type="NCBIfam" id="TIGR00171">
    <property type="entry name" value="leuD"/>
    <property type="match status" value="1"/>
</dbReference>
<dbReference type="NCBIfam" id="NF002458">
    <property type="entry name" value="PRK01641.1"/>
    <property type="match status" value="1"/>
</dbReference>
<dbReference type="PANTHER" id="PTHR43345:SF5">
    <property type="entry name" value="3-ISOPROPYLMALATE DEHYDRATASE SMALL SUBUNIT"/>
    <property type="match status" value="1"/>
</dbReference>
<dbReference type="PANTHER" id="PTHR43345">
    <property type="entry name" value="3-ISOPROPYLMALATE DEHYDRATASE SMALL SUBUNIT 2-RELATED-RELATED"/>
    <property type="match status" value="1"/>
</dbReference>
<dbReference type="Pfam" id="PF00694">
    <property type="entry name" value="Aconitase_C"/>
    <property type="match status" value="1"/>
</dbReference>
<dbReference type="SUPFAM" id="SSF52016">
    <property type="entry name" value="LeuD/IlvD-like"/>
    <property type="match status" value="1"/>
</dbReference>
<name>LEUD_MYCBO</name>
<proteinExistence type="evidence at protein level"/>
<keyword id="KW-0028">Amino-acid biosynthesis</keyword>
<keyword id="KW-0100">Branched-chain amino acid biosynthesis</keyword>
<keyword id="KW-0432">Leucine biosynthesis</keyword>
<keyword id="KW-0456">Lyase</keyword>
<keyword id="KW-1185">Reference proteome</keyword>
<comment type="function">
    <text evidence="1">Catalyzes the isomerization between 2-isopropylmalate and 3-isopropylmalate, via the formation of 2-isopropylmaleate.</text>
</comment>
<comment type="catalytic activity">
    <reaction>
        <text>(2R,3S)-3-isopropylmalate = (2S)-2-isopropylmalate</text>
        <dbReference type="Rhea" id="RHEA:32287"/>
        <dbReference type="ChEBI" id="CHEBI:1178"/>
        <dbReference type="ChEBI" id="CHEBI:35121"/>
        <dbReference type="EC" id="4.2.1.33"/>
    </reaction>
</comment>
<comment type="pathway">
    <text>Amino-acid biosynthesis; L-leucine biosynthesis; L-leucine from 3-methyl-2-oxobutanoate: step 2/4.</text>
</comment>
<comment type="subunit">
    <text evidence="1">Heterodimer of LeuC and LeuD.</text>
</comment>
<comment type="induction">
    <text evidence="2">Induced in response to the thiol oxidant diamide.</text>
</comment>
<comment type="similarity">
    <text evidence="3">Belongs to the LeuD family. LeuD type 1 subfamily.</text>
</comment>
<protein>
    <recommendedName>
        <fullName>3-isopropylmalate dehydratase small subunit</fullName>
        <ecNumber>4.2.1.33</ecNumber>
    </recommendedName>
    <alternativeName>
        <fullName>Alpha-IPM isomerase</fullName>
        <shortName>IPMI</shortName>
    </alternativeName>
    <alternativeName>
        <fullName>Isopropylmalate isomerase</fullName>
    </alternativeName>
</protein>
<sequence length="198" mass="21780">MEAFHTHSGIGVPLRRSNVDTDQIIPAVFLKRVTRTGFEDGLFAGWRSDPAFVLNLSPFDRGSVLVAGPDFGTGSSREHAVWALMDYGFRVVISSRFGDIFRGNAGKAGLLAAEVAQDDVELLWKLIEQSPGLEITANLQDRIITAATVVLPFKIDDHSAWRLLEGLDDIALTLRKLDEIEAFEGACAYWKPRTLPAP</sequence>